<feature type="chain" id="PRO_0000058269" description="Programmed cell death protein 7">
    <location>
        <begin position="1"/>
        <end position="485"/>
    </location>
</feature>
<feature type="region of interest" description="Disordered" evidence="3">
    <location>
        <begin position="1"/>
        <end position="133"/>
    </location>
</feature>
<feature type="coiled-coil region" evidence="2">
    <location>
        <begin position="232"/>
        <end position="335"/>
    </location>
</feature>
<feature type="coiled-coil region" evidence="2">
    <location>
        <begin position="362"/>
        <end position="411"/>
    </location>
</feature>
<feature type="compositionally biased region" description="Pro residues" evidence="3">
    <location>
        <begin position="12"/>
        <end position="48"/>
    </location>
</feature>
<feature type="compositionally biased region" description="Low complexity" evidence="3">
    <location>
        <begin position="49"/>
        <end position="71"/>
    </location>
</feature>
<feature type="compositionally biased region" description="Pro residues" evidence="3">
    <location>
        <begin position="82"/>
        <end position="96"/>
    </location>
</feature>
<feature type="compositionally biased region" description="Pro residues" evidence="3">
    <location>
        <begin position="109"/>
        <end position="130"/>
    </location>
</feature>
<feature type="sequence conflict" description="In Ref. 2; AAD20241." evidence="6" ref="2">
    <original>Q</original>
    <variation>GE</variation>
    <location>
        <position position="292"/>
    </location>
</feature>
<feature type="sequence conflict" description="In Ref. 2; AAD20241." evidence="6" ref="2">
    <original>S</original>
    <variation>A</variation>
    <location>
        <position position="303"/>
    </location>
</feature>
<gene>
    <name type="primary">PDCD7</name>
</gene>
<keyword id="KW-0002">3D-structure</keyword>
<keyword id="KW-0053">Apoptosis</keyword>
<keyword id="KW-0175">Coiled coil</keyword>
<keyword id="KW-0539">Nucleus</keyword>
<keyword id="KW-1267">Proteomics identification</keyword>
<keyword id="KW-1185">Reference proteome</keyword>
<keyword id="KW-0677">Repeat</keyword>
<reference key="1">
    <citation type="journal article" date="2004" name="Nat. Genet.">
        <title>Complete sequencing and characterization of 21,243 full-length human cDNAs.</title>
        <authorList>
            <person name="Ota T."/>
            <person name="Suzuki Y."/>
            <person name="Nishikawa T."/>
            <person name="Otsuki T."/>
            <person name="Sugiyama T."/>
            <person name="Irie R."/>
            <person name="Wakamatsu A."/>
            <person name="Hayashi K."/>
            <person name="Sato H."/>
            <person name="Nagai K."/>
            <person name="Kimura K."/>
            <person name="Makita H."/>
            <person name="Sekine M."/>
            <person name="Obayashi M."/>
            <person name="Nishi T."/>
            <person name="Shibahara T."/>
            <person name="Tanaka T."/>
            <person name="Ishii S."/>
            <person name="Yamamoto J."/>
            <person name="Saito K."/>
            <person name="Kawai Y."/>
            <person name="Isono Y."/>
            <person name="Nakamura Y."/>
            <person name="Nagahari K."/>
            <person name="Murakami K."/>
            <person name="Yasuda T."/>
            <person name="Iwayanagi T."/>
            <person name="Wagatsuma M."/>
            <person name="Shiratori A."/>
            <person name="Sudo H."/>
            <person name="Hosoiri T."/>
            <person name="Kaku Y."/>
            <person name="Kodaira H."/>
            <person name="Kondo H."/>
            <person name="Sugawara M."/>
            <person name="Takahashi M."/>
            <person name="Kanda K."/>
            <person name="Yokoi T."/>
            <person name="Furuya T."/>
            <person name="Kikkawa E."/>
            <person name="Omura Y."/>
            <person name="Abe K."/>
            <person name="Kamihara K."/>
            <person name="Katsuta N."/>
            <person name="Sato K."/>
            <person name="Tanikawa M."/>
            <person name="Yamazaki M."/>
            <person name="Ninomiya K."/>
            <person name="Ishibashi T."/>
            <person name="Yamashita H."/>
            <person name="Murakawa K."/>
            <person name="Fujimori K."/>
            <person name="Tanai H."/>
            <person name="Kimata M."/>
            <person name="Watanabe M."/>
            <person name="Hiraoka S."/>
            <person name="Chiba Y."/>
            <person name="Ishida S."/>
            <person name="Ono Y."/>
            <person name="Takiguchi S."/>
            <person name="Watanabe S."/>
            <person name="Yosida M."/>
            <person name="Hotuta T."/>
            <person name="Kusano J."/>
            <person name="Kanehori K."/>
            <person name="Takahashi-Fujii A."/>
            <person name="Hara H."/>
            <person name="Tanase T.-O."/>
            <person name="Nomura Y."/>
            <person name="Togiya S."/>
            <person name="Komai F."/>
            <person name="Hara R."/>
            <person name="Takeuchi K."/>
            <person name="Arita M."/>
            <person name="Imose N."/>
            <person name="Musashino K."/>
            <person name="Yuuki H."/>
            <person name="Oshima A."/>
            <person name="Sasaki N."/>
            <person name="Aotsuka S."/>
            <person name="Yoshikawa Y."/>
            <person name="Matsunawa H."/>
            <person name="Ichihara T."/>
            <person name="Shiohata N."/>
            <person name="Sano S."/>
            <person name="Moriya S."/>
            <person name="Momiyama H."/>
            <person name="Satoh N."/>
            <person name="Takami S."/>
            <person name="Terashima Y."/>
            <person name="Suzuki O."/>
            <person name="Nakagawa S."/>
            <person name="Senoh A."/>
            <person name="Mizoguchi H."/>
            <person name="Goto Y."/>
            <person name="Shimizu F."/>
            <person name="Wakebe H."/>
            <person name="Hishigaki H."/>
            <person name="Watanabe T."/>
            <person name="Sugiyama A."/>
            <person name="Takemoto M."/>
            <person name="Kawakami B."/>
            <person name="Yamazaki M."/>
            <person name="Watanabe K."/>
            <person name="Kumagai A."/>
            <person name="Itakura S."/>
            <person name="Fukuzumi Y."/>
            <person name="Fujimori Y."/>
            <person name="Komiyama M."/>
            <person name="Tashiro H."/>
            <person name="Tanigami A."/>
            <person name="Fujiwara T."/>
            <person name="Ono T."/>
            <person name="Yamada K."/>
            <person name="Fujii Y."/>
            <person name="Ozaki K."/>
            <person name="Hirao M."/>
            <person name="Ohmori Y."/>
            <person name="Kawabata A."/>
            <person name="Hikiji T."/>
            <person name="Kobatake N."/>
            <person name="Inagaki H."/>
            <person name="Ikema Y."/>
            <person name="Okamoto S."/>
            <person name="Okitani R."/>
            <person name="Kawakami T."/>
            <person name="Noguchi S."/>
            <person name="Itoh T."/>
            <person name="Shigeta K."/>
            <person name="Senba T."/>
            <person name="Matsumura K."/>
            <person name="Nakajima Y."/>
            <person name="Mizuno T."/>
            <person name="Morinaga M."/>
            <person name="Sasaki M."/>
            <person name="Togashi T."/>
            <person name="Oyama M."/>
            <person name="Hata H."/>
            <person name="Watanabe M."/>
            <person name="Komatsu T."/>
            <person name="Mizushima-Sugano J."/>
            <person name="Satoh T."/>
            <person name="Shirai Y."/>
            <person name="Takahashi Y."/>
            <person name="Nakagawa K."/>
            <person name="Okumura K."/>
            <person name="Nagase T."/>
            <person name="Nomura N."/>
            <person name="Kikuchi H."/>
            <person name="Masuho Y."/>
            <person name="Yamashita R."/>
            <person name="Nakai K."/>
            <person name="Yada T."/>
            <person name="Nakamura Y."/>
            <person name="Ohara O."/>
            <person name="Isogai T."/>
            <person name="Sugano S."/>
        </authorList>
    </citation>
    <scope>NUCLEOTIDE SEQUENCE [LARGE SCALE MRNA]</scope>
    <source>
        <tissue>Small intestine</tissue>
    </source>
</reference>
<reference key="2">
    <citation type="journal article" date="1999" name="Nucleic Acids Res.">
        <title>Characterization of a novel mouse cDNA, ES18, involved in apoptotic cell death of T-cells.</title>
        <authorList>
            <person name="Park E.J."/>
            <person name="Kim J.H."/>
            <person name="Seong R.H."/>
            <person name="Kim C.G."/>
            <person name="Park S.D."/>
            <person name="Hong S.H."/>
        </authorList>
    </citation>
    <scope>NUCLEOTIDE SEQUENCE [MRNA] OF 269-485</scope>
    <source>
        <tissue>Thymus</tissue>
    </source>
</reference>
<reference key="3">
    <citation type="journal article" date="2004" name="Genome Res.">
        <title>The status, quality, and expansion of the NIH full-length cDNA project: the Mammalian Gene Collection (MGC).</title>
        <authorList>
            <consortium name="The MGC Project Team"/>
        </authorList>
    </citation>
    <scope>NUCLEOTIDE SEQUENCE [LARGE SCALE MRNA] OF 340-485</scope>
    <source>
        <tissue>Duodenum</tissue>
    </source>
</reference>
<reference key="4">
    <citation type="submission" date="2003-05" db="EMBL/GenBank/DDBJ databases">
        <title>Cloning of human full-length CDSs in BD Creator(TM) system donor vector.</title>
        <authorList>
            <person name="Kalnine N."/>
            <person name="Chen X."/>
            <person name="Rolfs A."/>
            <person name="Halleck A."/>
            <person name="Hines L."/>
            <person name="Eisenstein S."/>
            <person name="Koundinya M."/>
            <person name="Raphael J."/>
            <person name="Moreira D."/>
            <person name="Kelley T."/>
            <person name="LaBaer J."/>
            <person name="Lin Y."/>
            <person name="Phelan M."/>
            <person name="Farmer A."/>
        </authorList>
    </citation>
    <scope>NUCLEOTIDE SEQUENCE [LARGE SCALE MRNA] OF 376-485</scope>
</reference>
<reference key="5">
    <citation type="journal article" date="2004" name="RNA">
        <title>The human 18S U11/U12 snRNP contains a set of novel proteins not found in the U2-dependent spliceosome.</title>
        <authorList>
            <person name="Will C.L."/>
            <person name="Schneider C."/>
            <person name="Hossbach M."/>
            <person name="Urlaub H."/>
            <person name="Rauhut R."/>
            <person name="Elbashir S."/>
            <person name="Tuschl T."/>
            <person name="Luehrmann R."/>
        </authorList>
    </citation>
    <scope>IDENTIFICATION IN A COMPLEX WITH THE U11/U12 SPLICEOSOME</scope>
    <scope>IDENTIFICATION BY MASS SPECTROMETRY</scope>
</reference>
<reference key="6">
    <citation type="journal article" date="2005" name="EMBO J.">
        <title>The U11/U12 snRNP 65K protein acts as a molecular bridge, binding the U12 snRNA and U11-59K protein.</title>
        <authorList>
            <person name="Benecke H."/>
            <person name="Luehrmann R."/>
            <person name="Will C.L."/>
        </authorList>
    </citation>
    <scope>INTERACTION WITH RBM40</scope>
</reference>
<protein>
    <recommendedName>
        <fullName>Programmed cell death protein 7</fullName>
    </recommendedName>
    <alternativeName>
        <fullName>ES18</fullName>
        <shortName>hES18</shortName>
    </alternativeName>
</protein>
<evidence type="ECO:0000250" key="1"/>
<evidence type="ECO:0000255" key="2"/>
<evidence type="ECO:0000256" key="3">
    <source>
        <dbReference type="SAM" id="MobiDB-lite"/>
    </source>
</evidence>
<evidence type="ECO:0000269" key="4">
    <source>
    </source>
</evidence>
<evidence type="ECO:0000269" key="5">
    <source>
    </source>
</evidence>
<evidence type="ECO:0000305" key="6"/>
<proteinExistence type="evidence at protein level"/>
<comment type="function">
    <text evidence="1">Promotes apoptosis when overexpressed.</text>
</comment>
<comment type="subunit">
    <text evidence="4 5">Interacts with RBM40. Component of the U11/U12 snRNPs that are part of the U12-type spliceosome.</text>
</comment>
<comment type="subcellular location">
    <subcellularLocation>
        <location evidence="6">Nucleus</location>
    </subcellularLocation>
</comment>
<accession>Q8N8D1</accession>
<accession>Q96AK8</accession>
<accession>Q9Y6D7</accession>
<name>PDCD7_HUMAN</name>
<dbReference type="EMBL" id="AK096970">
    <property type="protein sequence ID" value="BAC04915.1"/>
    <property type="molecule type" value="mRNA"/>
</dbReference>
<dbReference type="EMBL" id="AF083930">
    <property type="protein sequence ID" value="AAD20241.1"/>
    <property type="molecule type" value="mRNA"/>
</dbReference>
<dbReference type="EMBL" id="BC016992">
    <property type="protein sequence ID" value="AAH16992.2"/>
    <property type="molecule type" value="mRNA"/>
</dbReference>
<dbReference type="EMBL" id="BT007395">
    <property type="protein sequence ID" value="AAP36059.1"/>
    <property type="molecule type" value="mRNA"/>
</dbReference>
<dbReference type="CCDS" id="CCDS10201.1"/>
<dbReference type="RefSeq" id="NP_005698.1">
    <property type="nucleotide sequence ID" value="NM_005707.2"/>
</dbReference>
<dbReference type="PDB" id="8R7N">
    <property type="method" value="EM"/>
    <property type="resolution" value="3.40 A"/>
    <property type="chains" value="D=1-485"/>
</dbReference>
<dbReference type="PDB" id="8Y6O">
    <property type="method" value="EM"/>
    <property type="resolution" value="3.38 A"/>
    <property type="chains" value="Z=1-485"/>
</dbReference>
<dbReference type="PDB" id="9GBW">
    <property type="method" value="EM"/>
    <property type="resolution" value="3.50 A"/>
    <property type="chains" value="D=1-485"/>
</dbReference>
<dbReference type="PDB" id="9GC0">
    <property type="method" value="EM"/>
    <property type="resolution" value="3.20 A"/>
    <property type="chains" value="D=1-485"/>
</dbReference>
<dbReference type="PDB" id="9GCM">
    <property type="method" value="EM"/>
    <property type="resolution" value="3.10 A"/>
    <property type="chains" value="D=1-485"/>
</dbReference>
<dbReference type="PDBsum" id="8R7N"/>
<dbReference type="PDBsum" id="8Y6O"/>
<dbReference type="PDBsum" id="9GBW"/>
<dbReference type="PDBsum" id="9GC0"/>
<dbReference type="PDBsum" id="9GCM"/>
<dbReference type="EMDB" id="EMD-18984"/>
<dbReference type="EMDB" id="EMD-38993"/>
<dbReference type="EMDB" id="EMD-51223"/>
<dbReference type="EMDB" id="EMD-51226"/>
<dbReference type="EMDB" id="EMD-51234"/>
<dbReference type="SMR" id="Q8N8D1"/>
<dbReference type="BioGRID" id="115390">
    <property type="interactions" value="73"/>
</dbReference>
<dbReference type="CORUM" id="Q8N8D1"/>
<dbReference type="FunCoup" id="Q8N8D1">
    <property type="interactions" value="1858"/>
</dbReference>
<dbReference type="IntAct" id="Q8N8D1">
    <property type="interactions" value="31"/>
</dbReference>
<dbReference type="MINT" id="Q8N8D1"/>
<dbReference type="STRING" id="9606.ENSP00000204549"/>
<dbReference type="iPTMnet" id="Q8N8D1"/>
<dbReference type="MetOSite" id="Q8N8D1"/>
<dbReference type="PhosphoSitePlus" id="Q8N8D1"/>
<dbReference type="BioMuta" id="PDCD7"/>
<dbReference type="DMDM" id="38258174"/>
<dbReference type="jPOST" id="Q8N8D1"/>
<dbReference type="MassIVE" id="Q8N8D1"/>
<dbReference type="PaxDb" id="9606-ENSP00000204549"/>
<dbReference type="PeptideAtlas" id="Q8N8D1"/>
<dbReference type="ProteomicsDB" id="72402"/>
<dbReference type="Pumba" id="Q8N8D1"/>
<dbReference type="Antibodypedia" id="25914">
    <property type="antibodies" value="244 antibodies from 30 providers"/>
</dbReference>
<dbReference type="DNASU" id="10081"/>
<dbReference type="Ensembl" id="ENST00000204549.9">
    <property type="protein sequence ID" value="ENSP00000204549.4"/>
    <property type="gene ID" value="ENSG00000090470.15"/>
</dbReference>
<dbReference type="GeneID" id="10081"/>
<dbReference type="KEGG" id="hsa:10081"/>
<dbReference type="MANE-Select" id="ENST00000204549.9">
    <property type="protein sequence ID" value="ENSP00000204549.4"/>
    <property type="RefSeq nucleotide sequence ID" value="NM_005707.2"/>
    <property type="RefSeq protein sequence ID" value="NP_005698.1"/>
</dbReference>
<dbReference type="UCSC" id="uc002aol.3">
    <property type="organism name" value="human"/>
</dbReference>
<dbReference type="AGR" id="HGNC:8767"/>
<dbReference type="CTD" id="10081"/>
<dbReference type="DisGeNET" id="10081"/>
<dbReference type="GeneCards" id="PDCD7"/>
<dbReference type="HGNC" id="HGNC:8767">
    <property type="gene designation" value="PDCD7"/>
</dbReference>
<dbReference type="HPA" id="ENSG00000090470">
    <property type="expression patterns" value="Low tissue specificity"/>
</dbReference>
<dbReference type="MIM" id="608138">
    <property type="type" value="gene"/>
</dbReference>
<dbReference type="neXtProt" id="NX_Q8N8D1"/>
<dbReference type="OpenTargets" id="ENSG00000090470"/>
<dbReference type="PharmGKB" id="PA33117"/>
<dbReference type="VEuPathDB" id="HostDB:ENSG00000090470"/>
<dbReference type="eggNOG" id="ENOG502QQNP">
    <property type="taxonomic scope" value="Eukaryota"/>
</dbReference>
<dbReference type="GeneTree" id="ENSGT00390000017392"/>
<dbReference type="HOGENOM" id="CLU_027959_0_0_1"/>
<dbReference type="InParanoid" id="Q8N8D1"/>
<dbReference type="OMA" id="TSFWQRD"/>
<dbReference type="OrthoDB" id="2289628at2759"/>
<dbReference type="PAN-GO" id="Q8N8D1">
    <property type="GO annotations" value="0 GO annotations based on evolutionary models"/>
</dbReference>
<dbReference type="PhylomeDB" id="Q8N8D1"/>
<dbReference type="TreeFam" id="TF332996"/>
<dbReference type="PathwayCommons" id="Q8N8D1"/>
<dbReference type="Reactome" id="R-HSA-72165">
    <property type="pathway name" value="mRNA Splicing - Minor Pathway"/>
</dbReference>
<dbReference type="SignaLink" id="Q8N8D1"/>
<dbReference type="BioGRID-ORCS" id="10081">
    <property type="hits" value="620 hits in 1161 CRISPR screens"/>
</dbReference>
<dbReference type="ChiTaRS" id="PDCD7">
    <property type="organism name" value="human"/>
</dbReference>
<dbReference type="GeneWiki" id="PDCD7"/>
<dbReference type="GenomeRNAi" id="10081"/>
<dbReference type="Pharos" id="Q8N8D1">
    <property type="development level" value="Tbio"/>
</dbReference>
<dbReference type="PRO" id="PR:Q8N8D1"/>
<dbReference type="Proteomes" id="UP000005640">
    <property type="component" value="Chromosome 15"/>
</dbReference>
<dbReference type="RNAct" id="Q8N8D1">
    <property type="molecule type" value="protein"/>
</dbReference>
<dbReference type="Bgee" id="ENSG00000090470">
    <property type="expression patterns" value="Expressed in secondary oocyte and 198 other cell types or tissues"/>
</dbReference>
<dbReference type="ExpressionAtlas" id="Q8N8D1">
    <property type="expression patterns" value="baseline and differential"/>
</dbReference>
<dbReference type="GO" id="GO:0005654">
    <property type="term" value="C:nucleoplasm"/>
    <property type="evidence" value="ECO:0000304"/>
    <property type="project" value="Reactome"/>
</dbReference>
<dbReference type="GO" id="GO:0005689">
    <property type="term" value="C:U12-type spliceosomal complex"/>
    <property type="evidence" value="ECO:0000314"/>
    <property type="project" value="HGNC-UCL"/>
</dbReference>
<dbReference type="GO" id="GO:0006915">
    <property type="term" value="P:apoptotic process"/>
    <property type="evidence" value="ECO:0007669"/>
    <property type="project" value="UniProtKB-KW"/>
</dbReference>
<dbReference type="GO" id="GO:0051384">
    <property type="term" value="P:response to glucocorticoid"/>
    <property type="evidence" value="ECO:0000250"/>
    <property type="project" value="HGNC-UCL"/>
</dbReference>
<dbReference type="GO" id="GO:0008380">
    <property type="term" value="P:RNA splicing"/>
    <property type="evidence" value="ECO:0000305"/>
    <property type="project" value="HGNC-UCL"/>
</dbReference>
<dbReference type="InterPro" id="IPR052831">
    <property type="entry name" value="Apoptosis_promoter"/>
</dbReference>
<dbReference type="InterPro" id="IPR031974">
    <property type="entry name" value="PDCD7"/>
</dbReference>
<dbReference type="PANTHER" id="PTHR48190">
    <property type="entry name" value="PROGRAMMED CELL DEATH PROTEIN 7"/>
    <property type="match status" value="1"/>
</dbReference>
<dbReference type="PANTHER" id="PTHR48190:SF2">
    <property type="entry name" value="PROGRAMMED CELL DEATH PROTEIN 7"/>
    <property type="match status" value="1"/>
</dbReference>
<dbReference type="Pfam" id="PF16021">
    <property type="entry name" value="PDCD7"/>
    <property type="match status" value="1"/>
</dbReference>
<organism>
    <name type="scientific">Homo sapiens</name>
    <name type="common">Human</name>
    <dbReference type="NCBI Taxonomy" id="9606"/>
    <lineage>
        <taxon>Eukaryota</taxon>
        <taxon>Metazoa</taxon>
        <taxon>Chordata</taxon>
        <taxon>Craniata</taxon>
        <taxon>Vertebrata</taxon>
        <taxon>Euteleostomi</taxon>
        <taxon>Mammalia</taxon>
        <taxon>Eutheria</taxon>
        <taxon>Euarchontoglires</taxon>
        <taxon>Primates</taxon>
        <taxon>Haplorrhini</taxon>
        <taxon>Catarrhini</taxon>
        <taxon>Hominidae</taxon>
        <taxon>Homo</taxon>
    </lineage>
</organism>
<sequence>MALPPFFGQGRPGPPPPQPPPPAPFGCPPPPLPSPAFPPPLPQRPGPFPGASAPFLQPPLALQPRASAEASRGGGGAGAFYPVPPPPLPPPPPQCRPFPGTDAGERPRPPPPGPGPPWSPRWPEAPPPPADVLGDAALQRLRDRQWLEAVFGTPRRAGCPVPQRTHAGPSLGEVRARLLRALRLVRRLRGLSQALREAEADGAAWVLLYSQTAPLRAELAERLQPLTQAAYVGEARRRLERVRRRRLRLRERAREREAEREAEAARAVEREQEIDRWRVKCVQEVEEKKREQELKAAADGVLSEVRKKQADTKRMVDILRALEKLRKLRKEAAARKGVCPPASADETFTHHLQRLRKLIKKRSELYEAEERALRVMLEGEQEEERKRELEKKQRKEKEKILLQKREIESKLFGDPDEFPLAHLLEPFRQYYLQAEHSLPALIQIRHDWDQYLVPSDHPKGNFVPQGWVLPPLPSNDIWATAVKLH</sequence>